<name>CYSP4_DICDI</name>
<sequence>MRVLSFLCLLLVSYASAKQQFSELQYRNAFTNWMQAHQRTYSSEEFNARYQIFKSNMDYVHQWNSKGGETVLGLNVFADITNQEYRTTYLGTPFDGSALIGTEEEKIFSTPAPTVDWRAQGAVTPIKNQGQCGGCWSFSTTGSTEGAHFIASGTKKDLVSLSEQNLIDCSKSYGNNGCEGGLMTLAFEYIINNKGIDTESSYPYTAEDGKECKFKTSNIGAQIVSYQNVTSGSEASLQSASNNAPVSVAIDASNESFQLYESGIYYEPACSPTQLDHGVLVVGYGSGSSSSSGSSSGKSSSSSSTGGKTSSSSSSGKASSSSSGKASSSSSSGKTSSAASSTSGSQSGSQSGSQSGQSTGSQSGQTSASGQASASGSGSGSGSGSGSGSGSGAVEASSGNYWIVKNSWGTSWGMDGYIFMSKDRNNNCGIATMASFPTASSN</sequence>
<dbReference type="EC" id="3.4.22.-"/>
<dbReference type="EMBL" id="L36204">
    <property type="protein sequence ID" value="AAA92019.1"/>
    <property type="molecule type" value="mRNA"/>
</dbReference>
<dbReference type="EMBL" id="AAFI02000024">
    <property type="protein sequence ID" value="EAL67962.1"/>
    <property type="molecule type" value="Genomic_DNA"/>
</dbReference>
<dbReference type="RefSeq" id="XP_641963.1">
    <property type="nucleotide sequence ID" value="XM_636871.1"/>
</dbReference>
<dbReference type="SMR" id="P54639"/>
<dbReference type="FunCoup" id="P54639">
    <property type="interactions" value="75"/>
</dbReference>
<dbReference type="STRING" id="44689.P54639"/>
<dbReference type="MEROPS" id="C01.A57"/>
<dbReference type="GlyCosmos" id="P54639">
    <property type="glycosylation" value="2 sites, No reported glycans"/>
</dbReference>
<dbReference type="GlyGen" id="P54639">
    <property type="glycosylation" value="3 sites"/>
</dbReference>
<dbReference type="PaxDb" id="44689-DDB0214999"/>
<dbReference type="EnsemblProtists" id="EAL67962">
    <property type="protein sequence ID" value="EAL67962"/>
    <property type="gene ID" value="DDB_G0278721"/>
</dbReference>
<dbReference type="GeneID" id="8621695"/>
<dbReference type="KEGG" id="ddi:DDB_G0278721"/>
<dbReference type="dictyBase" id="DDB_G0278721">
    <property type="gene designation" value="cprD"/>
</dbReference>
<dbReference type="VEuPathDB" id="AmoebaDB:DDB_G0278721"/>
<dbReference type="eggNOG" id="KOG1543">
    <property type="taxonomic scope" value="Eukaryota"/>
</dbReference>
<dbReference type="HOGENOM" id="CLU_012184_1_2_1"/>
<dbReference type="InParanoid" id="P54639"/>
<dbReference type="OMA" id="QWTGNSQ"/>
<dbReference type="PhylomeDB" id="P54639"/>
<dbReference type="Reactome" id="R-DDI-1474228">
    <property type="pathway name" value="Degradation of the extracellular matrix"/>
</dbReference>
<dbReference type="Reactome" id="R-DDI-2132295">
    <property type="pathway name" value="MHC class II antigen presentation"/>
</dbReference>
<dbReference type="Reactome" id="R-DDI-6798695">
    <property type="pathway name" value="Neutrophil degranulation"/>
</dbReference>
<dbReference type="PRO" id="PR:P54639"/>
<dbReference type="Proteomes" id="UP000002195">
    <property type="component" value="Chromosome 3"/>
</dbReference>
<dbReference type="GO" id="GO:0005615">
    <property type="term" value="C:extracellular space"/>
    <property type="evidence" value="ECO:0000318"/>
    <property type="project" value="GO_Central"/>
</dbReference>
<dbReference type="GO" id="GO:0005764">
    <property type="term" value="C:lysosome"/>
    <property type="evidence" value="ECO:0000318"/>
    <property type="project" value="GO_Central"/>
</dbReference>
<dbReference type="GO" id="GO:0004197">
    <property type="term" value="F:cysteine-type endopeptidase activity"/>
    <property type="evidence" value="ECO:0000318"/>
    <property type="project" value="GO_Central"/>
</dbReference>
<dbReference type="GO" id="GO:0006955">
    <property type="term" value="P:immune response"/>
    <property type="evidence" value="ECO:0000318"/>
    <property type="project" value="GO_Central"/>
</dbReference>
<dbReference type="GO" id="GO:2001235">
    <property type="term" value="P:positive regulation of apoptotic signaling pathway"/>
    <property type="evidence" value="ECO:0000318"/>
    <property type="project" value="GO_Central"/>
</dbReference>
<dbReference type="GO" id="GO:0051603">
    <property type="term" value="P:proteolysis involved in protein catabolic process"/>
    <property type="evidence" value="ECO:0000318"/>
    <property type="project" value="GO_Central"/>
</dbReference>
<dbReference type="CDD" id="cd02248">
    <property type="entry name" value="Peptidase_C1A"/>
    <property type="match status" value="1"/>
</dbReference>
<dbReference type="FunFam" id="2.40.50.170:FF:000001">
    <property type="entry name" value="Cathepsin L1"/>
    <property type="match status" value="1"/>
</dbReference>
<dbReference type="FunFam" id="3.90.70.10:FF:000039">
    <property type="entry name" value="Cysteine proteinase 2, putative"/>
    <property type="match status" value="1"/>
</dbReference>
<dbReference type="Gene3D" id="3.90.70.10">
    <property type="entry name" value="Cysteine proteinases"/>
    <property type="match status" value="1"/>
</dbReference>
<dbReference type="Gene3D" id="2.40.50.170">
    <property type="entry name" value="Cysteine proteinases. Chain C"/>
    <property type="match status" value="1"/>
</dbReference>
<dbReference type="InterPro" id="IPR038765">
    <property type="entry name" value="Papain-like_cys_pep_sf"/>
</dbReference>
<dbReference type="InterPro" id="IPR025661">
    <property type="entry name" value="Pept_asp_AS"/>
</dbReference>
<dbReference type="InterPro" id="IPR000169">
    <property type="entry name" value="Pept_cys_AS"/>
</dbReference>
<dbReference type="InterPro" id="IPR025660">
    <property type="entry name" value="Pept_his_AS"/>
</dbReference>
<dbReference type="InterPro" id="IPR013128">
    <property type="entry name" value="Peptidase_C1A"/>
</dbReference>
<dbReference type="InterPro" id="IPR000668">
    <property type="entry name" value="Peptidase_C1A_C"/>
</dbReference>
<dbReference type="InterPro" id="IPR039417">
    <property type="entry name" value="Peptidase_C1A_papain-like"/>
</dbReference>
<dbReference type="InterPro" id="IPR013201">
    <property type="entry name" value="Prot_inhib_I29"/>
</dbReference>
<dbReference type="PANTHER" id="PTHR12411">
    <property type="entry name" value="CYSTEINE PROTEASE FAMILY C1-RELATED"/>
    <property type="match status" value="1"/>
</dbReference>
<dbReference type="Pfam" id="PF08246">
    <property type="entry name" value="Inhibitor_I29"/>
    <property type="match status" value="1"/>
</dbReference>
<dbReference type="Pfam" id="PF00112">
    <property type="entry name" value="Peptidase_C1"/>
    <property type="match status" value="2"/>
</dbReference>
<dbReference type="PRINTS" id="PR00705">
    <property type="entry name" value="PAPAIN"/>
</dbReference>
<dbReference type="SMART" id="SM00848">
    <property type="entry name" value="Inhibitor_I29"/>
    <property type="match status" value="1"/>
</dbReference>
<dbReference type="SMART" id="SM00645">
    <property type="entry name" value="Pept_C1"/>
    <property type="match status" value="1"/>
</dbReference>
<dbReference type="SUPFAM" id="SSF54001">
    <property type="entry name" value="Cysteine proteinases"/>
    <property type="match status" value="1"/>
</dbReference>
<dbReference type="PROSITE" id="PS00640">
    <property type="entry name" value="THIOL_PROTEASE_ASN"/>
    <property type="match status" value="1"/>
</dbReference>
<dbReference type="PROSITE" id="PS00139">
    <property type="entry name" value="THIOL_PROTEASE_CYS"/>
    <property type="match status" value="1"/>
</dbReference>
<dbReference type="PROSITE" id="PS00639">
    <property type="entry name" value="THIOL_PROTEASE_HIS"/>
    <property type="match status" value="1"/>
</dbReference>
<organism>
    <name type="scientific">Dictyostelium discoideum</name>
    <name type="common">Social amoeba</name>
    <dbReference type="NCBI Taxonomy" id="44689"/>
    <lineage>
        <taxon>Eukaryota</taxon>
        <taxon>Amoebozoa</taxon>
        <taxon>Evosea</taxon>
        <taxon>Eumycetozoa</taxon>
        <taxon>Dictyostelia</taxon>
        <taxon>Dictyosteliales</taxon>
        <taxon>Dictyosteliaceae</taxon>
        <taxon>Dictyostelium</taxon>
    </lineage>
</organism>
<protein>
    <recommendedName>
        <fullName>Cysteine proteinase 4</fullName>
        <ecNumber>3.4.22.-</ecNumber>
    </recommendedName>
</protein>
<comment type="subcellular location">
    <subcellularLocation>
        <location>Lysosome</location>
    </subcellularLocation>
</comment>
<comment type="developmental stage">
    <text>Present in the vegetative phase and decreases with the start development, reappears in low levels when the fruiting body is formed.</text>
</comment>
<comment type="PTM">
    <text>Glycosylated; contains GlcNAc-alpha-1-P-Ser residues and fucose.</text>
</comment>
<comment type="similarity">
    <text evidence="3 4 5">Belongs to the peptidase C1 family.</text>
</comment>
<keyword id="KW-1015">Disulfide bond</keyword>
<keyword id="KW-0325">Glycoprotein</keyword>
<keyword id="KW-0378">Hydrolase</keyword>
<keyword id="KW-0458">Lysosome</keyword>
<keyword id="KW-0645">Protease</keyword>
<keyword id="KW-1185">Reference proteome</keyword>
<keyword id="KW-0677">Repeat</keyword>
<keyword id="KW-0732">Signal</keyword>
<keyword id="KW-0788">Thiol protease</keyword>
<keyword id="KW-0865">Zymogen</keyword>
<proteinExistence type="evidence at transcript level"/>
<accession>P54639</accession>
<accession>Q54XR7</accession>
<reference key="1">
    <citation type="journal article" date="1995" name="J. Biol. Chem.">
        <title>Identification of two novel Dictyostelium discoideum cysteine proteinases that carry N-acetylglucosamine-1-P-modification.</title>
        <authorList>
            <person name="Souza G.M."/>
            <person name="Hirai J."/>
            <person name="Mehta D.P."/>
            <person name="Freeze H.H."/>
        </authorList>
    </citation>
    <scope>NUCLEOTIDE SEQUENCE [MRNA]</scope>
    <source>
        <strain>AX4</strain>
    </source>
</reference>
<reference key="2">
    <citation type="journal article" date="2005" name="Nature">
        <title>The genome of the social amoeba Dictyostelium discoideum.</title>
        <authorList>
            <person name="Eichinger L."/>
            <person name="Pachebat J.A."/>
            <person name="Gloeckner G."/>
            <person name="Rajandream M.A."/>
            <person name="Sucgang R."/>
            <person name="Berriman M."/>
            <person name="Song J."/>
            <person name="Olsen R."/>
            <person name="Szafranski K."/>
            <person name="Xu Q."/>
            <person name="Tunggal B."/>
            <person name="Kummerfeld S."/>
            <person name="Madera M."/>
            <person name="Konfortov B.A."/>
            <person name="Rivero F."/>
            <person name="Bankier A.T."/>
            <person name="Lehmann R."/>
            <person name="Hamlin N."/>
            <person name="Davies R."/>
            <person name="Gaudet P."/>
            <person name="Fey P."/>
            <person name="Pilcher K."/>
            <person name="Chen G."/>
            <person name="Saunders D."/>
            <person name="Sodergren E.J."/>
            <person name="Davis P."/>
            <person name="Kerhornou A."/>
            <person name="Nie X."/>
            <person name="Hall N."/>
            <person name="Anjard C."/>
            <person name="Hemphill L."/>
            <person name="Bason N."/>
            <person name="Farbrother P."/>
            <person name="Desany B."/>
            <person name="Just E."/>
            <person name="Morio T."/>
            <person name="Rost R."/>
            <person name="Churcher C.M."/>
            <person name="Cooper J."/>
            <person name="Haydock S."/>
            <person name="van Driessche N."/>
            <person name="Cronin A."/>
            <person name="Goodhead I."/>
            <person name="Muzny D.M."/>
            <person name="Mourier T."/>
            <person name="Pain A."/>
            <person name="Lu M."/>
            <person name="Harper D."/>
            <person name="Lindsay R."/>
            <person name="Hauser H."/>
            <person name="James K.D."/>
            <person name="Quiles M."/>
            <person name="Madan Babu M."/>
            <person name="Saito T."/>
            <person name="Buchrieser C."/>
            <person name="Wardroper A."/>
            <person name="Felder M."/>
            <person name="Thangavelu M."/>
            <person name="Johnson D."/>
            <person name="Knights A."/>
            <person name="Loulseged H."/>
            <person name="Mungall K.L."/>
            <person name="Oliver K."/>
            <person name="Price C."/>
            <person name="Quail M.A."/>
            <person name="Urushihara H."/>
            <person name="Hernandez J."/>
            <person name="Rabbinowitsch E."/>
            <person name="Steffen D."/>
            <person name="Sanders M."/>
            <person name="Ma J."/>
            <person name="Kohara Y."/>
            <person name="Sharp S."/>
            <person name="Simmonds M.N."/>
            <person name="Spiegler S."/>
            <person name="Tivey A."/>
            <person name="Sugano S."/>
            <person name="White B."/>
            <person name="Walker D."/>
            <person name="Woodward J.R."/>
            <person name="Winckler T."/>
            <person name="Tanaka Y."/>
            <person name="Shaulsky G."/>
            <person name="Schleicher M."/>
            <person name="Weinstock G.M."/>
            <person name="Rosenthal A."/>
            <person name="Cox E.C."/>
            <person name="Chisholm R.L."/>
            <person name="Gibbs R.A."/>
            <person name="Loomis W.F."/>
            <person name="Platzer M."/>
            <person name="Kay R.R."/>
            <person name="Williams J.G."/>
            <person name="Dear P.H."/>
            <person name="Noegel A.A."/>
            <person name="Barrell B.G."/>
            <person name="Kuspa A."/>
        </authorList>
    </citation>
    <scope>NUCLEOTIDE SEQUENCE [LARGE SCALE GENOMIC DNA]</scope>
    <source>
        <strain>AX4</strain>
    </source>
</reference>
<gene>
    <name type="primary">cprD</name>
    <name type="synonym">CP4</name>
    <name type="ORF">DDB_G0278721</name>
</gene>
<feature type="signal peptide" evidence="2">
    <location>
        <begin position="1"/>
        <end position="17"/>
    </location>
</feature>
<feature type="propeptide" id="PRO_0000026362" description="Activation peptide" evidence="2">
    <location>
        <begin position="18"/>
        <end position="111"/>
    </location>
</feature>
<feature type="chain" id="PRO_0000026363" description="Cysteine proteinase 4">
    <location>
        <begin position="112"/>
        <end position="442"/>
    </location>
</feature>
<feature type="region of interest" description="Disordered" evidence="6">
    <location>
        <begin position="286"/>
        <end position="396"/>
    </location>
</feature>
<feature type="compositionally biased region" description="Low complexity" evidence="6">
    <location>
        <begin position="287"/>
        <end position="376"/>
    </location>
</feature>
<feature type="compositionally biased region" description="Gly residues" evidence="6">
    <location>
        <begin position="377"/>
        <end position="391"/>
    </location>
</feature>
<feature type="active site" evidence="1">
    <location>
        <position position="135"/>
    </location>
</feature>
<feature type="active site" evidence="1">
    <location>
        <position position="277"/>
    </location>
</feature>
<feature type="active site" evidence="1">
    <location>
        <position position="406"/>
    </location>
</feature>
<feature type="glycosylation site" description="N-linked (GlcNAc...) asparagine" evidence="2">
    <location>
        <position position="228"/>
    </location>
</feature>
<feature type="glycosylation site" description="N-linked (GlcNAc...) asparagine" evidence="2">
    <location>
        <position position="254"/>
    </location>
</feature>
<feature type="disulfide bond" evidence="1">
    <location>
        <begin position="132"/>
        <end position="178"/>
    </location>
</feature>
<feature type="disulfide bond" evidence="1">
    <location>
        <begin position="169"/>
        <end position="212"/>
    </location>
</feature>
<feature type="disulfide bond" evidence="1">
    <location>
        <begin position="270"/>
        <end position="428"/>
    </location>
</feature>
<feature type="sequence conflict" description="In Ref. 1; AAA92019." evidence="7" ref="1">
    <original>A</original>
    <variation>G</variation>
    <location>
        <position position="186"/>
    </location>
</feature>
<feature type="sequence conflict" description="In Ref. 1; AAA92019." evidence="7" ref="1">
    <original>S</original>
    <variation>T</variation>
    <location>
        <position position="271"/>
    </location>
</feature>
<evidence type="ECO:0000250" key="1"/>
<evidence type="ECO:0000255" key="2"/>
<evidence type="ECO:0000255" key="3">
    <source>
        <dbReference type="PROSITE-ProRule" id="PRU10088"/>
    </source>
</evidence>
<evidence type="ECO:0000255" key="4">
    <source>
        <dbReference type="PROSITE-ProRule" id="PRU10089"/>
    </source>
</evidence>
<evidence type="ECO:0000255" key="5">
    <source>
        <dbReference type="PROSITE-ProRule" id="PRU10090"/>
    </source>
</evidence>
<evidence type="ECO:0000256" key="6">
    <source>
        <dbReference type="SAM" id="MobiDB-lite"/>
    </source>
</evidence>
<evidence type="ECO:0000305" key="7"/>